<comment type="function">
    <text evidence="1">Probably part of an ABC transporter complex. Responsible for energy coupling to the transport system (By similarity).</text>
</comment>
<comment type="subcellular location">
    <subcellularLocation>
        <location evidence="1">Cell membrane</location>
        <topology evidence="1">Peripheral membrane protein</topology>
    </subcellularLocation>
</comment>
<comment type="similarity">
    <text evidence="3">Belongs to the ABC transporter superfamily.</text>
</comment>
<dbReference type="EC" id="7.-.-.-"/>
<dbReference type="EMBL" id="BA000001">
    <property type="protein sequence ID" value="BAA29201.1"/>
    <property type="molecule type" value="Genomic_DNA"/>
</dbReference>
<dbReference type="PIR" id="B71234">
    <property type="entry name" value="B71234"/>
</dbReference>
<dbReference type="RefSeq" id="WP_010884246.1">
    <property type="nucleotide sequence ID" value="NC_000961.1"/>
</dbReference>
<dbReference type="SMR" id="O57872"/>
<dbReference type="IntAct" id="O57872">
    <property type="interactions" value="1"/>
</dbReference>
<dbReference type="MINT" id="O57872"/>
<dbReference type="STRING" id="70601.gene:9377040"/>
<dbReference type="EnsemblBacteria" id="BAA29201">
    <property type="protein sequence ID" value="BAA29201"/>
    <property type="gene ID" value="BAA29201"/>
</dbReference>
<dbReference type="GeneID" id="1444028"/>
<dbReference type="KEGG" id="pho:PH0132"/>
<dbReference type="eggNOG" id="arCOG00202">
    <property type="taxonomic scope" value="Archaea"/>
</dbReference>
<dbReference type="OrthoDB" id="35850at2157"/>
<dbReference type="Proteomes" id="UP000000752">
    <property type="component" value="Chromosome"/>
</dbReference>
<dbReference type="GO" id="GO:0043190">
    <property type="term" value="C:ATP-binding cassette (ABC) transporter complex"/>
    <property type="evidence" value="ECO:0007669"/>
    <property type="project" value="TreeGrafter"/>
</dbReference>
<dbReference type="GO" id="GO:0005524">
    <property type="term" value="F:ATP binding"/>
    <property type="evidence" value="ECO:0007669"/>
    <property type="project" value="UniProtKB-KW"/>
</dbReference>
<dbReference type="GO" id="GO:0016887">
    <property type="term" value="F:ATP hydrolysis activity"/>
    <property type="evidence" value="ECO:0007669"/>
    <property type="project" value="InterPro"/>
</dbReference>
<dbReference type="GO" id="GO:0042626">
    <property type="term" value="F:ATPase-coupled transmembrane transporter activity"/>
    <property type="evidence" value="ECO:0007669"/>
    <property type="project" value="TreeGrafter"/>
</dbReference>
<dbReference type="GO" id="GO:0006824">
    <property type="term" value="P:cobalt ion transport"/>
    <property type="evidence" value="ECO:0007669"/>
    <property type="project" value="InterPro"/>
</dbReference>
<dbReference type="CDD" id="cd03225">
    <property type="entry name" value="ABC_cobalt_CbiO_domain1"/>
    <property type="match status" value="1"/>
</dbReference>
<dbReference type="FunFam" id="3.40.50.300:FF:000224">
    <property type="entry name" value="Energy-coupling factor transporter ATP-binding protein EcfA"/>
    <property type="match status" value="1"/>
</dbReference>
<dbReference type="Gene3D" id="3.40.50.300">
    <property type="entry name" value="P-loop containing nucleotide triphosphate hydrolases"/>
    <property type="match status" value="1"/>
</dbReference>
<dbReference type="InterPro" id="IPR003593">
    <property type="entry name" value="AAA+_ATPase"/>
</dbReference>
<dbReference type="InterPro" id="IPR003439">
    <property type="entry name" value="ABC_transporter-like_ATP-bd"/>
</dbReference>
<dbReference type="InterPro" id="IPR017871">
    <property type="entry name" value="ABC_transporter-like_CS"/>
</dbReference>
<dbReference type="InterPro" id="IPR015856">
    <property type="entry name" value="ABC_transpr_CbiO/EcfA_su"/>
</dbReference>
<dbReference type="InterPro" id="IPR005876">
    <property type="entry name" value="Co_trans_ATP-bd"/>
</dbReference>
<dbReference type="InterPro" id="IPR050095">
    <property type="entry name" value="ECF_ABC_transporter_ATP-bd"/>
</dbReference>
<dbReference type="InterPro" id="IPR027417">
    <property type="entry name" value="P-loop_NTPase"/>
</dbReference>
<dbReference type="NCBIfam" id="TIGR01166">
    <property type="entry name" value="cbiO"/>
    <property type="match status" value="1"/>
</dbReference>
<dbReference type="PANTHER" id="PTHR43553:SF25">
    <property type="entry name" value="ABC-TYPE COBALT TRANSPORT SYSTEM, ATPASE COMPONENT"/>
    <property type="match status" value="1"/>
</dbReference>
<dbReference type="PANTHER" id="PTHR43553">
    <property type="entry name" value="HEAVY METAL TRANSPORTER"/>
    <property type="match status" value="1"/>
</dbReference>
<dbReference type="Pfam" id="PF00005">
    <property type="entry name" value="ABC_tran"/>
    <property type="match status" value="1"/>
</dbReference>
<dbReference type="SMART" id="SM00382">
    <property type="entry name" value="AAA"/>
    <property type="match status" value="1"/>
</dbReference>
<dbReference type="SUPFAM" id="SSF52540">
    <property type="entry name" value="P-loop containing nucleoside triphosphate hydrolases"/>
    <property type="match status" value="1"/>
</dbReference>
<dbReference type="PROSITE" id="PS00211">
    <property type="entry name" value="ABC_TRANSPORTER_1"/>
    <property type="match status" value="1"/>
</dbReference>
<dbReference type="PROSITE" id="PS50893">
    <property type="entry name" value="ABC_TRANSPORTER_2"/>
    <property type="match status" value="1"/>
</dbReference>
<keyword id="KW-0067">ATP-binding</keyword>
<keyword id="KW-1003">Cell membrane</keyword>
<keyword id="KW-0472">Membrane</keyword>
<keyword id="KW-0547">Nucleotide-binding</keyword>
<keyword id="KW-1278">Translocase</keyword>
<keyword id="KW-0813">Transport</keyword>
<sequence>MIEFRDVWFWYQEGKTVLKSISFSFSEGTLAIVGPNGSGKTTLVKMLNGLLKPKKGNVLIDGINTKEVSVAELSRIVGYVFQNPDAMFFEENVFKEVAFGPKNLGLNEEEVKKRVRWALEAVGLRGFENRNPFELSGGEKQRLAIACILAMKPKYLVLDEPNTGLDERGLQDLINVIKNLRREGSSIILVTHDIELVLEVADKVLLLKDGELKFFGSTKEFFELDLEGFGLKEPELVKISKDVGINFVRNVEELLKVIGL</sequence>
<evidence type="ECO:0000250" key="1"/>
<evidence type="ECO:0000255" key="2">
    <source>
        <dbReference type="PROSITE-ProRule" id="PRU00434"/>
    </source>
</evidence>
<evidence type="ECO:0000305" key="3"/>
<reference key="1">
    <citation type="journal article" date="1998" name="DNA Res.">
        <title>Complete sequence and gene organization of the genome of a hyper-thermophilic archaebacterium, Pyrococcus horikoshii OT3.</title>
        <authorList>
            <person name="Kawarabayasi Y."/>
            <person name="Sawada M."/>
            <person name="Horikawa H."/>
            <person name="Haikawa Y."/>
            <person name="Hino Y."/>
            <person name="Yamamoto S."/>
            <person name="Sekine M."/>
            <person name="Baba S."/>
            <person name="Kosugi H."/>
            <person name="Hosoyama A."/>
            <person name="Nagai Y."/>
            <person name="Sakai M."/>
            <person name="Ogura K."/>
            <person name="Otsuka R."/>
            <person name="Nakazawa H."/>
            <person name="Takamiya M."/>
            <person name="Ohfuku Y."/>
            <person name="Funahashi T."/>
            <person name="Tanaka T."/>
            <person name="Kudoh Y."/>
            <person name="Yamazaki J."/>
            <person name="Kushida N."/>
            <person name="Oguchi A."/>
            <person name="Aoki K."/>
            <person name="Yoshizawa T."/>
            <person name="Nakamura Y."/>
            <person name="Robb F.T."/>
            <person name="Horikoshi K."/>
            <person name="Masuchi Y."/>
            <person name="Shizuya H."/>
            <person name="Kikuchi H."/>
        </authorList>
    </citation>
    <scope>NUCLEOTIDE SEQUENCE [LARGE SCALE GENOMIC DNA]</scope>
    <source>
        <strain>ATCC 700860 / DSM 12428 / JCM 9974 / NBRC 100139 / OT-3</strain>
    </source>
</reference>
<feature type="chain" id="PRO_0000092159" description="Putative ABC transporter ATP-binding protein PH0132">
    <location>
        <begin position="1"/>
        <end position="260"/>
    </location>
</feature>
<feature type="domain" description="ABC transporter" evidence="2">
    <location>
        <begin position="2"/>
        <end position="234"/>
    </location>
</feature>
<feature type="binding site" evidence="2">
    <location>
        <begin position="34"/>
        <end position="41"/>
    </location>
    <ligand>
        <name>ATP</name>
        <dbReference type="ChEBI" id="CHEBI:30616"/>
    </ligand>
</feature>
<accession>O57872</accession>
<protein>
    <recommendedName>
        <fullName>Putative ABC transporter ATP-binding protein PH0132</fullName>
        <ecNumber>7.-.-.-</ecNumber>
    </recommendedName>
</protein>
<name>Y132_PYRHO</name>
<gene>
    <name type="ordered locus">PH0132</name>
</gene>
<proteinExistence type="inferred from homology"/>
<organism>
    <name type="scientific">Pyrococcus horikoshii (strain ATCC 700860 / DSM 12428 / JCM 9974 / NBRC 100139 / OT-3)</name>
    <dbReference type="NCBI Taxonomy" id="70601"/>
    <lineage>
        <taxon>Archaea</taxon>
        <taxon>Methanobacteriati</taxon>
        <taxon>Methanobacteriota</taxon>
        <taxon>Thermococci</taxon>
        <taxon>Thermococcales</taxon>
        <taxon>Thermococcaceae</taxon>
        <taxon>Pyrococcus</taxon>
    </lineage>
</organism>